<dbReference type="EC" id="7.1.2.2" evidence="1"/>
<dbReference type="EMBL" id="CP000633">
    <property type="protein sequence ID" value="ACM37972.1"/>
    <property type="molecule type" value="Genomic_DNA"/>
</dbReference>
<dbReference type="RefSeq" id="WP_015917383.1">
    <property type="nucleotide sequence ID" value="NC_011989.1"/>
</dbReference>
<dbReference type="SMR" id="B9JTR4"/>
<dbReference type="STRING" id="311402.Avi_4108"/>
<dbReference type="KEGG" id="avi:Avi_4108"/>
<dbReference type="eggNOG" id="COG0056">
    <property type="taxonomic scope" value="Bacteria"/>
</dbReference>
<dbReference type="HOGENOM" id="CLU_010091_2_1_5"/>
<dbReference type="Proteomes" id="UP000001596">
    <property type="component" value="Chromosome 1"/>
</dbReference>
<dbReference type="GO" id="GO:0005886">
    <property type="term" value="C:plasma membrane"/>
    <property type="evidence" value="ECO:0007669"/>
    <property type="project" value="UniProtKB-SubCell"/>
</dbReference>
<dbReference type="GO" id="GO:0045259">
    <property type="term" value="C:proton-transporting ATP synthase complex"/>
    <property type="evidence" value="ECO:0007669"/>
    <property type="project" value="UniProtKB-KW"/>
</dbReference>
<dbReference type="GO" id="GO:0043531">
    <property type="term" value="F:ADP binding"/>
    <property type="evidence" value="ECO:0007669"/>
    <property type="project" value="TreeGrafter"/>
</dbReference>
<dbReference type="GO" id="GO:0005524">
    <property type="term" value="F:ATP binding"/>
    <property type="evidence" value="ECO:0007669"/>
    <property type="project" value="UniProtKB-UniRule"/>
</dbReference>
<dbReference type="GO" id="GO:0046933">
    <property type="term" value="F:proton-transporting ATP synthase activity, rotational mechanism"/>
    <property type="evidence" value="ECO:0007669"/>
    <property type="project" value="UniProtKB-UniRule"/>
</dbReference>
<dbReference type="CDD" id="cd18113">
    <property type="entry name" value="ATP-synt_F1_alpha_C"/>
    <property type="match status" value="1"/>
</dbReference>
<dbReference type="CDD" id="cd18116">
    <property type="entry name" value="ATP-synt_F1_alpha_N"/>
    <property type="match status" value="1"/>
</dbReference>
<dbReference type="CDD" id="cd01132">
    <property type="entry name" value="F1-ATPase_alpha_CD"/>
    <property type="match status" value="1"/>
</dbReference>
<dbReference type="FunFam" id="1.20.150.20:FF:000001">
    <property type="entry name" value="ATP synthase subunit alpha"/>
    <property type="match status" value="1"/>
</dbReference>
<dbReference type="FunFam" id="2.40.30.20:FF:000001">
    <property type="entry name" value="ATP synthase subunit alpha"/>
    <property type="match status" value="1"/>
</dbReference>
<dbReference type="FunFam" id="3.40.50.300:FF:002432">
    <property type="entry name" value="ATP synthase subunit alpha, mitochondrial"/>
    <property type="match status" value="1"/>
</dbReference>
<dbReference type="Gene3D" id="2.40.30.20">
    <property type="match status" value="1"/>
</dbReference>
<dbReference type="Gene3D" id="1.20.150.20">
    <property type="entry name" value="ATP synthase alpha/beta chain, C-terminal domain"/>
    <property type="match status" value="1"/>
</dbReference>
<dbReference type="Gene3D" id="3.40.50.300">
    <property type="entry name" value="P-loop containing nucleotide triphosphate hydrolases"/>
    <property type="match status" value="1"/>
</dbReference>
<dbReference type="HAMAP" id="MF_01346">
    <property type="entry name" value="ATP_synth_alpha_bact"/>
    <property type="match status" value="1"/>
</dbReference>
<dbReference type="InterPro" id="IPR023366">
    <property type="entry name" value="ATP_synth_asu-like_sf"/>
</dbReference>
<dbReference type="InterPro" id="IPR000793">
    <property type="entry name" value="ATP_synth_asu_C"/>
</dbReference>
<dbReference type="InterPro" id="IPR038376">
    <property type="entry name" value="ATP_synth_asu_C_sf"/>
</dbReference>
<dbReference type="InterPro" id="IPR033732">
    <property type="entry name" value="ATP_synth_F1_a_nt-bd_dom"/>
</dbReference>
<dbReference type="InterPro" id="IPR005294">
    <property type="entry name" value="ATP_synth_F1_asu"/>
</dbReference>
<dbReference type="InterPro" id="IPR020003">
    <property type="entry name" value="ATPase_a/bsu_AS"/>
</dbReference>
<dbReference type="InterPro" id="IPR004100">
    <property type="entry name" value="ATPase_F1/V1/A1_a/bsu_N"/>
</dbReference>
<dbReference type="InterPro" id="IPR036121">
    <property type="entry name" value="ATPase_F1/V1/A1_a/bsu_N_sf"/>
</dbReference>
<dbReference type="InterPro" id="IPR000194">
    <property type="entry name" value="ATPase_F1/V1/A1_a/bsu_nucl-bd"/>
</dbReference>
<dbReference type="InterPro" id="IPR027417">
    <property type="entry name" value="P-loop_NTPase"/>
</dbReference>
<dbReference type="NCBIfam" id="TIGR00962">
    <property type="entry name" value="atpA"/>
    <property type="match status" value="1"/>
</dbReference>
<dbReference type="NCBIfam" id="NF009884">
    <property type="entry name" value="PRK13343.1"/>
    <property type="match status" value="1"/>
</dbReference>
<dbReference type="PANTHER" id="PTHR48082">
    <property type="entry name" value="ATP SYNTHASE SUBUNIT ALPHA, MITOCHONDRIAL"/>
    <property type="match status" value="1"/>
</dbReference>
<dbReference type="PANTHER" id="PTHR48082:SF2">
    <property type="entry name" value="ATP SYNTHASE SUBUNIT ALPHA, MITOCHONDRIAL"/>
    <property type="match status" value="1"/>
</dbReference>
<dbReference type="Pfam" id="PF00006">
    <property type="entry name" value="ATP-synt_ab"/>
    <property type="match status" value="1"/>
</dbReference>
<dbReference type="Pfam" id="PF00306">
    <property type="entry name" value="ATP-synt_ab_C"/>
    <property type="match status" value="1"/>
</dbReference>
<dbReference type="Pfam" id="PF02874">
    <property type="entry name" value="ATP-synt_ab_N"/>
    <property type="match status" value="1"/>
</dbReference>
<dbReference type="PIRSF" id="PIRSF039088">
    <property type="entry name" value="F_ATPase_subunit_alpha"/>
    <property type="match status" value="1"/>
</dbReference>
<dbReference type="SUPFAM" id="SSF47917">
    <property type="entry name" value="C-terminal domain of alpha and beta subunits of F1 ATP synthase"/>
    <property type="match status" value="1"/>
</dbReference>
<dbReference type="SUPFAM" id="SSF50615">
    <property type="entry name" value="N-terminal domain of alpha and beta subunits of F1 ATP synthase"/>
    <property type="match status" value="1"/>
</dbReference>
<dbReference type="SUPFAM" id="SSF52540">
    <property type="entry name" value="P-loop containing nucleoside triphosphate hydrolases"/>
    <property type="match status" value="1"/>
</dbReference>
<dbReference type="PROSITE" id="PS00152">
    <property type="entry name" value="ATPASE_ALPHA_BETA"/>
    <property type="match status" value="1"/>
</dbReference>
<name>ATPA_ALLAM</name>
<keyword id="KW-0066">ATP synthesis</keyword>
<keyword id="KW-0067">ATP-binding</keyword>
<keyword id="KW-0997">Cell inner membrane</keyword>
<keyword id="KW-1003">Cell membrane</keyword>
<keyword id="KW-0139">CF(1)</keyword>
<keyword id="KW-0375">Hydrogen ion transport</keyword>
<keyword id="KW-0406">Ion transport</keyword>
<keyword id="KW-0472">Membrane</keyword>
<keyword id="KW-0547">Nucleotide-binding</keyword>
<keyword id="KW-1185">Reference proteome</keyword>
<keyword id="KW-1278">Translocase</keyword>
<keyword id="KW-0813">Transport</keyword>
<proteinExistence type="inferred from homology"/>
<organism>
    <name type="scientific">Allorhizobium ampelinum (strain ATCC BAA-846 / DSM 112012 / S4)</name>
    <name type="common">Agrobacterium vitis (strain S4)</name>
    <dbReference type="NCBI Taxonomy" id="311402"/>
    <lineage>
        <taxon>Bacteria</taxon>
        <taxon>Pseudomonadati</taxon>
        <taxon>Pseudomonadota</taxon>
        <taxon>Alphaproteobacteria</taxon>
        <taxon>Hyphomicrobiales</taxon>
        <taxon>Rhizobiaceae</taxon>
        <taxon>Rhizobium/Agrobacterium group</taxon>
        <taxon>Allorhizobium</taxon>
        <taxon>Allorhizobium ampelinum</taxon>
    </lineage>
</organism>
<sequence length="508" mass="54616">MDIRAAEISAILKNQIKNFGQDAEVSEVGQVLSVGDGIARVYGLDNVQAGEMVEFPGGIRGMALNLESDNVGVVIFGSDRDIKEGDTVKRTGAIVEVPVGPELLGRVVDALGNPIDGKGPINSAIRSRVDVKAPGIIPRKGVHEPMSTGIKAIDALIPVGRGQRELVIGDRQTGKTAIILDTFLNQKPAHDAGGDDKMFCVYVAIGQKRSTVAQFVKVLEERGALKYSIIIAATASDPAPMQYLAPFAGCTMGEYFRDKGQHALIAYDDLSKQAVAYRQMSLLLRRPPGREAYPGDVFYLHSRLLERAAKLSDERGAGSLTALPVIETQGNDVSAFIPTNVISITDGQIFLETDLFYQGIRPAVNVGLSVSRVGSAAQIKAMKQVAGSIKGELAQYREMAAFAQFGSDLDAATQRLLNRGARLTELLKQPQFSPLKVEEQVVVIFAGVNGYLDKLAVSDVGRFEHGVLSYLRTEGKDILDAIRTEKAISDDVKGKLKAALDTFAKSFA</sequence>
<comment type="function">
    <text evidence="1">Produces ATP from ADP in the presence of a proton gradient across the membrane. The alpha chain is a regulatory subunit.</text>
</comment>
<comment type="catalytic activity">
    <reaction evidence="1">
        <text>ATP + H2O + 4 H(+)(in) = ADP + phosphate + 5 H(+)(out)</text>
        <dbReference type="Rhea" id="RHEA:57720"/>
        <dbReference type="ChEBI" id="CHEBI:15377"/>
        <dbReference type="ChEBI" id="CHEBI:15378"/>
        <dbReference type="ChEBI" id="CHEBI:30616"/>
        <dbReference type="ChEBI" id="CHEBI:43474"/>
        <dbReference type="ChEBI" id="CHEBI:456216"/>
        <dbReference type="EC" id="7.1.2.2"/>
    </reaction>
</comment>
<comment type="subunit">
    <text evidence="1">F-type ATPases have 2 components, CF(1) - the catalytic core - and CF(0) - the membrane proton channel. CF(1) has five subunits: alpha(3), beta(3), gamma(1), delta(1), epsilon(1). CF(0) has three main subunits: a(1), b(2) and c(9-12). The alpha and beta chains form an alternating ring which encloses part of the gamma chain. CF(1) is attached to CF(0) by a central stalk formed by the gamma and epsilon chains, while a peripheral stalk is formed by the delta and b chains.</text>
</comment>
<comment type="subcellular location">
    <subcellularLocation>
        <location evidence="1">Cell inner membrane</location>
        <topology evidence="1">Peripheral membrane protein</topology>
    </subcellularLocation>
</comment>
<comment type="similarity">
    <text evidence="1">Belongs to the ATPase alpha/beta chains family.</text>
</comment>
<gene>
    <name evidence="1" type="primary">atpA</name>
    <name type="ordered locus">Avi_4108</name>
</gene>
<evidence type="ECO:0000255" key="1">
    <source>
        <dbReference type="HAMAP-Rule" id="MF_01346"/>
    </source>
</evidence>
<feature type="chain" id="PRO_1000166511" description="ATP synthase subunit alpha">
    <location>
        <begin position="1"/>
        <end position="508"/>
    </location>
</feature>
<feature type="binding site" evidence="1">
    <location>
        <begin position="169"/>
        <end position="176"/>
    </location>
    <ligand>
        <name>ATP</name>
        <dbReference type="ChEBI" id="CHEBI:30616"/>
    </ligand>
</feature>
<feature type="site" description="Required for activity" evidence="1">
    <location>
        <position position="369"/>
    </location>
</feature>
<accession>B9JTR4</accession>
<reference key="1">
    <citation type="journal article" date="2009" name="J. Bacteriol.">
        <title>Genome sequences of three Agrobacterium biovars help elucidate the evolution of multichromosome genomes in bacteria.</title>
        <authorList>
            <person name="Slater S.C."/>
            <person name="Goldman B.S."/>
            <person name="Goodner B."/>
            <person name="Setubal J.C."/>
            <person name="Farrand S.K."/>
            <person name="Nester E.W."/>
            <person name="Burr T.J."/>
            <person name="Banta L."/>
            <person name="Dickerman A.W."/>
            <person name="Paulsen I."/>
            <person name="Otten L."/>
            <person name="Suen G."/>
            <person name="Welch R."/>
            <person name="Almeida N.F."/>
            <person name="Arnold F."/>
            <person name="Burton O.T."/>
            <person name="Du Z."/>
            <person name="Ewing A."/>
            <person name="Godsy E."/>
            <person name="Heisel S."/>
            <person name="Houmiel K.L."/>
            <person name="Jhaveri J."/>
            <person name="Lu J."/>
            <person name="Miller N.M."/>
            <person name="Norton S."/>
            <person name="Chen Q."/>
            <person name="Phoolcharoen W."/>
            <person name="Ohlin V."/>
            <person name="Ondrusek D."/>
            <person name="Pride N."/>
            <person name="Stricklin S.L."/>
            <person name="Sun J."/>
            <person name="Wheeler C."/>
            <person name="Wilson L."/>
            <person name="Zhu H."/>
            <person name="Wood D.W."/>
        </authorList>
    </citation>
    <scope>NUCLEOTIDE SEQUENCE [LARGE SCALE GENOMIC DNA]</scope>
    <source>
        <strain>ATCC BAA-846 / DSM 112012 / S4</strain>
    </source>
</reference>
<protein>
    <recommendedName>
        <fullName evidence="1">ATP synthase subunit alpha</fullName>
        <ecNumber evidence="1">7.1.2.2</ecNumber>
    </recommendedName>
    <alternativeName>
        <fullName evidence="1">ATP synthase F1 sector subunit alpha</fullName>
    </alternativeName>
    <alternativeName>
        <fullName evidence="1">F-ATPase subunit alpha</fullName>
    </alternativeName>
</protein>